<organism>
    <name type="scientific">Homo sapiens</name>
    <name type="common">Human</name>
    <dbReference type="NCBI Taxonomy" id="9606"/>
    <lineage>
        <taxon>Eukaryota</taxon>
        <taxon>Metazoa</taxon>
        <taxon>Chordata</taxon>
        <taxon>Craniata</taxon>
        <taxon>Vertebrata</taxon>
        <taxon>Euteleostomi</taxon>
        <taxon>Mammalia</taxon>
        <taxon>Eutheria</taxon>
        <taxon>Euarchontoglires</taxon>
        <taxon>Primates</taxon>
        <taxon>Haplorrhini</taxon>
        <taxon>Catarrhini</taxon>
        <taxon>Hominidae</taxon>
        <taxon>Homo</taxon>
    </lineage>
</organism>
<proteinExistence type="evidence at protein level"/>
<evidence type="ECO:0000255" key="1">
    <source>
        <dbReference type="PROSITE-ProRule" id="PRU00538"/>
    </source>
</evidence>
<evidence type="ECO:0000269" key="2">
    <source>
    </source>
</evidence>
<evidence type="ECO:0000269" key="3">
    <source>
    </source>
</evidence>
<evidence type="ECO:0000269" key="4">
    <source>
    </source>
</evidence>
<evidence type="ECO:0000269" key="5">
    <source>
    </source>
</evidence>
<evidence type="ECO:0000303" key="6">
    <source>
    </source>
</evidence>
<evidence type="ECO:0000303" key="7">
    <source>
    </source>
</evidence>
<evidence type="ECO:0000305" key="8"/>
<evidence type="ECO:0000305" key="9">
    <source>
    </source>
</evidence>
<evidence type="ECO:0000305" key="10">
    <source>
    </source>
</evidence>
<evidence type="ECO:0000312" key="11">
    <source>
        <dbReference type="HGNC" id="HGNC:34397"/>
    </source>
</evidence>
<evidence type="ECO:0007744" key="12">
    <source>
        <dbReference type="PDB" id="5NFN"/>
    </source>
</evidence>
<evidence type="ECO:0007744" key="13">
    <source>
        <dbReference type="PDB" id="5NFO"/>
    </source>
</evidence>
<evidence type="ECO:0007829" key="14">
    <source>
        <dbReference type="PDB" id="5NFO"/>
    </source>
</evidence>
<comment type="function">
    <text evidence="3 4">Bifunctional enzyme that acts both as an endopeptidase and 2-oxoglutarate-dependent monooxygenase (PubMed:28847961, PubMed:29915238). Endopeptidase that cleaves histones N-terminal tails at the carboxyl side of methylated arginine or lysine residues, to generate 'tailless nucleosomes', which may trigger transcription elongation (PubMed:28847961). Preferentially recognizes and cleaves monomethylated and dimethylated arginine residues of histones H2, H3 and H4 (PubMed:28847961). After initial cleavage, continues to digest histones tails via its aminopeptidase activity (PubMed:28847961). Additionally, may play a role in protein biosynthesis by modifying the translation machinery (PubMed:29915238). Acts as a Fe(2+) and 2-oxoglutarate-dependent monooxygenase, catalyzing (S)-stereospecific hydroxylation at C-3 of 'Lys-22' of DRG1 and 'Lys-21' of DRG2 translation factors (TRAFAC), promoting their interaction with ribonucleic acids (RNA) (PubMed:29915238).</text>
</comment>
<comment type="catalytic activity">
    <reaction evidence="4 5">
        <text>L-lysyl-[protein] + 2-oxoglutarate + O2 = (3S)-3-hydroxy-L-lysyl-[protein] + succinate + CO2</text>
        <dbReference type="Rhea" id="RHEA:57152"/>
        <dbReference type="Rhea" id="RHEA-COMP:9752"/>
        <dbReference type="Rhea" id="RHEA-COMP:15133"/>
        <dbReference type="ChEBI" id="CHEBI:15379"/>
        <dbReference type="ChEBI" id="CHEBI:16526"/>
        <dbReference type="ChEBI" id="CHEBI:16810"/>
        <dbReference type="ChEBI" id="CHEBI:29969"/>
        <dbReference type="ChEBI" id="CHEBI:30031"/>
        <dbReference type="ChEBI" id="CHEBI:141492"/>
        <dbReference type="EC" id="1.14.11.63"/>
    </reaction>
    <physiologicalReaction direction="left-to-right" evidence="4 5">
        <dbReference type="Rhea" id="RHEA:57153"/>
    </physiologicalReaction>
</comment>
<comment type="cofactor">
    <cofactor evidence="4">
        <name>Fe(2+)</name>
        <dbReference type="ChEBI" id="CHEBI:29033"/>
    </cofactor>
</comment>
<comment type="subunit">
    <text evidence="4">Homodimer; disulfide-linked. Interacts with DRG1 and DRG2.</text>
</comment>
<comment type="interaction">
    <interactant intactId="EBI-9090173">
        <id>P0C870</id>
    </interactant>
    <interactant intactId="EBI-718729">
        <id>P55212</id>
        <label>CASP6</label>
    </interactant>
    <organismsDiffer>false</organismsDiffer>
    <experiments>3</experiments>
</comment>
<comment type="interaction">
    <interactant intactId="EBI-9090173">
        <id>P0C870</id>
    </interactant>
    <interactant intactId="EBI-750565">
        <id>P55039</id>
        <label>DRG2</label>
    </interactant>
    <organismsDiffer>false</organismsDiffer>
    <experiments>3</experiments>
</comment>
<comment type="interaction">
    <interactant intactId="EBI-9090173">
        <id>P0C870</id>
    </interactant>
    <interactant intactId="EBI-12018822">
        <id>Q12951-2</id>
        <label>FOXI1</label>
    </interactant>
    <organismsDiffer>false</organismsDiffer>
    <experiments>3</experiments>
</comment>
<comment type="interaction">
    <interactant intactId="EBI-9090173">
        <id>P0C870</id>
    </interactant>
    <interactant intactId="EBI-10188645">
        <id>O75603</id>
        <label>GCM2</label>
    </interactant>
    <organismsDiffer>false</organismsDiffer>
    <experiments>3</experiments>
</comment>
<comment type="interaction">
    <interactant intactId="EBI-9090173">
        <id>P0C870</id>
    </interactant>
    <interactant intactId="EBI-740220">
        <id>O14964</id>
        <label>HGS</label>
    </interactant>
    <organismsDiffer>false</organismsDiffer>
    <experiments>3</experiments>
</comment>
<comment type="interaction">
    <interactant intactId="EBI-9090173">
        <id>P0C870</id>
    </interactant>
    <interactant intactId="EBI-352682">
        <id>P04792</id>
        <label>HSPB1</label>
    </interactant>
    <organismsDiffer>false</organismsDiffer>
    <experiments>3</experiments>
</comment>
<comment type="interaction">
    <interactant intactId="EBI-9090173">
        <id>P0C870</id>
    </interactant>
    <interactant intactId="EBI-10975473">
        <id>O60333-2</id>
        <label>KIF1B</label>
    </interactant>
    <organismsDiffer>false</organismsDiffer>
    <experiments>3</experiments>
</comment>
<comment type="interaction">
    <interactant intactId="EBI-9090173">
        <id>P0C870</id>
    </interactant>
    <interactant intactId="EBI-21591415">
        <id>P13473-2</id>
        <label>LAMP2</label>
    </interactant>
    <organismsDiffer>false</organismsDiffer>
    <experiments>3</experiments>
</comment>
<comment type="interaction">
    <interactant intactId="EBI-9090173">
        <id>P0C870</id>
    </interactant>
    <interactant intactId="EBI-12813389">
        <id>Q8TDS5</id>
        <label>OXER1</label>
    </interactant>
    <organismsDiffer>false</organismsDiffer>
    <experiments>3</experiments>
</comment>
<comment type="interaction">
    <interactant intactId="EBI-9090173">
        <id>P0C870</id>
    </interactant>
    <interactant intactId="EBI-1389308">
        <id>Q7Z3K3</id>
        <label>POGZ</label>
    </interactant>
    <organismsDiffer>false</organismsDiffer>
    <experiments>3</experiments>
</comment>
<comment type="interaction">
    <interactant intactId="EBI-9090173">
        <id>P0C870</id>
    </interactant>
    <interactant intactId="EBI-11956563">
        <id>Q96HA1-2</id>
        <label>POM121</label>
    </interactant>
    <organismsDiffer>false</organismsDiffer>
    <experiments>3</experiments>
</comment>
<comment type="interaction">
    <interactant intactId="EBI-9090173">
        <id>P0C870</id>
    </interactant>
    <interactant intactId="EBI-5280197">
        <id>O75400-2</id>
        <label>PRPF40A</label>
    </interactant>
    <organismsDiffer>false</organismsDiffer>
    <experiments>3</experiments>
</comment>
<comment type="interaction">
    <interactant intactId="EBI-9090173">
        <id>P0C870</id>
    </interactant>
    <interactant intactId="EBI-286642">
        <id>P62826</id>
        <label>RAN</label>
    </interactant>
    <organismsDiffer>false</organismsDiffer>
    <experiments>3</experiments>
</comment>
<comment type="interaction">
    <interactant intactId="EBI-9090173">
        <id>P0C870</id>
    </interactant>
    <interactant intactId="EBI-14067109">
        <id>Q96NU1</id>
        <label>SAMD11</label>
    </interactant>
    <organismsDiffer>false</organismsDiffer>
    <experiments>3</experiments>
</comment>
<comment type="interaction">
    <interactant intactId="EBI-9090173">
        <id>P0C870</id>
    </interactant>
    <interactant intactId="EBI-2623095">
        <id>Q9Y371</id>
        <label>SH3GLB1</label>
    </interactant>
    <organismsDiffer>false</organismsDiffer>
    <experiments>3</experiments>
</comment>
<comment type="interaction">
    <interactant intactId="EBI-9090173">
        <id>P0C870</id>
    </interactant>
    <interactant intactId="EBI-766589">
        <id>P09234</id>
        <label>SNRPC</label>
    </interactant>
    <organismsDiffer>false</organismsDiffer>
    <experiments>5</experiments>
</comment>
<comment type="interaction">
    <interactant intactId="EBI-9090173">
        <id>P0C870</id>
    </interactant>
    <interactant intactId="EBI-2514383">
        <id>Q5T6F2</id>
        <label>UBAP2</label>
    </interactant>
    <organismsDiffer>false</organismsDiffer>
    <experiments>3</experiments>
</comment>
<comment type="interaction">
    <interactant intactId="EBI-9090173">
        <id>P0C870</id>
    </interactant>
    <interactant intactId="EBI-2107455">
        <id>Q08AM6</id>
        <label>VAC14</label>
    </interactant>
    <organismsDiffer>false</organismsDiffer>
    <experiments>3</experiments>
</comment>
<comment type="interaction">
    <interactant intactId="EBI-9090173">
        <id>P0C870</id>
    </interactant>
    <interactant intactId="EBI-720609">
        <id>O76024</id>
        <label>WFS1</label>
    </interactant>
    <organismsDiffer>false</organismsDiffer>
    <experiments>3</experiments>
</comment>
<comment type="subcellular location">
    <subcellularLocation>
        <location evidence="4">Nucleus</location>
    </subcellularLocation>
    <subcellularLocation>
        <location evidence="4">Cytoplasm</location>
    </subcellularLocation>
</comment>
<comment type="caution">
    <text evidence="8">This sequence was first thought to be an alternatively spliced isoform of PLA2G4B. It is derived from JMJD7 which is located upstream of PLA2G4B. Most tissues also express read-through transcripts from JMJD7 into the downstream PLA2G4B gene, some of which may encode fusion proteins combining the N-terminus of this protein with PLA2G4B protein.</text>
</comment>
<sequence>MAEAALEAVRSELREFPAAARELCVPLAVPYLDKPPTPLHFYRDWVCPNRPCIIRNALQHWPALQKWSLPYFRATVGSTEVSVAVTPDGYADAVRGDRFMMPAERRLPLSFVLDVLEGRAQHPGVLYVQKQCSNLPSELPQLLPDLESHVPWASEALGKMPDAVNFWLGEAAAVTSLHKDHYENLYCVVSGEKHFLFHPPSDRPFIPYELYTPATYQLTEEGTFKVVDEEAMEKVPWIPLDPLAPDLARYPSYSQAQALRCTVRAGEMLYLPALWFHHVQQSQGCIAVNFWYDMEYDLKYSYFQLLDSLTKASGLD</sequence>
<dbReference type="EC" id="1.14.11.63" evidence="4 5"/>
<dbReference type="EC" id="3.4.-.-" evidence="3"/>
<dbReference type="EMBL" id="AK289833">
    <property type="protein sequence ID" value="BAF82522.1"/>
    <property type="molecule type" value="mRNA"/>
</dbReference>
<dbReference type="EMBL" id="AK290051">
    <property type="protein sequence ID" value="BAF82740.1"/>
    <property type="molecule type" value="mRNA"/>
</dbReference>
<dbReference type="EMBL" id="BC025290">
    <property type="protein sequence ID" value="AAH25290.1"/>
    <property type="molecule type" value="mRNA"/>
</dbReference>
<dbReference type="EMBL" id="BC139899">
    <property type="protein sequence ID" value="AAI39900.1"/>
    <property type="molecule type" value="mRNA"/>
</dbReference>
<dbReference type="CCDS" id="CCDS45240.1"/>
<dbReference type="RefSeq" id="NP_001108104.1">
    <property type="nucleotide sequence ID" value="NM_001114632.2"/>
</dbReference>
<dbReference type="PDB" id="5NFN">
    <property type="method" value="X-ray"/>
    <property type="resolution" value="2.98 A"/>
    <property type="chains" value="A/B/C/D=1-316"/>
</dbReference>
<dbReference type="PDB" id="5NFO">
    <property type="method" value="X-ray"/>
    <property type="resolution" value="2.17 A"/>
    <property type="chains" value="A/B=1-316"/>
</dbReference>
<dbReference type="PDBsum" id="5NFN"/>
<dbReference type="PDBsum" id="5NFO"/>
<dbReference type="SMR" id="P0C870"/>
<dbReference type="BioGRID" id="936684">
    <property type="interactions" value="20"/>
</dbReference>
<dbReference type="FunCoup" id="P0C870">
    <property type="interactions" value="1801"/>
</dbReference>
<dbReference type="IntAct" id="P0C870">
    <property type="interactions" value="29"/>
</dbReference>
<dbReference type="MINT" id="P0C870"/>
<dbReference type="STRING" id="9606.ENSP00000380467"/>
<dbReference type="BindingDB" id="P0C870"/>
<dbReference type="ChEMBL" id="CHEMBL4879430"/>
<dbReference type="iPTMnet" id="P0C870"/>
<dbReference type="PhosphoSitePlus" id="P0C870"/>
<dbReference type="BioMuta" id="JMJD7"/>
<dbReference type="DMDM" id="205783894"/>
<dbReference type="jPOST" id="P0C870"/>
<dbReference type="MassIVE" id="P0C870"/>
<dbReference type="PaxDb" id="9606-ENSP00000380467"/>
<dbReference type="PeptideAtlas" id="P0C870"/>
<dbReference type="Pumba" id="P0C870"/>
<dbReference type="Antibodypedia" id="35028">
    <property type="antibodies" value="94 antibodies from 27 providers"/>
</dbReference>
<dbReference type="DNASU" id="100137047"/>
<dbReference type="Ensembl" id="ENST00000397299.9">
    <property type="protein sequence ID" value="ENSP00000380467.4"/>
    <property type="gene ID" value="ENSG00000243789.11"/>
</dbReference>
<dbReference type="GeneID" id="100137047"/>
<dbReference type="KEGG" id="hsa:100137047"/>
<dbReference type="MANE-Select" id="ENST00000397299.9">
    <property type="protein sequence ID" value="ENSP00000380467.4"/>
    <property type="RefSeq nucleotide sequence ID" value="NM_001114632.2"/>
    <property type="RefSeq protein sequence ID" value="NP_001108104.1"/>
</dbReference>
<dbReference type="UCSC" id="uc001zon.3">
    <property type="organism name" value="human"/>
</dbReference>
<dbReference type="AGR" id="HGNC:34397"/>
<dbReference type="CTD" id="100137047"/>
<dbReference type="DisGeNET" id="100137047"/>
<dbReference type="GeneCards" id="JMJD7"/>
<dbReference type="HGNC" id="HGNC:34397">
    <property type="gene designation" value="JMJD7"/>
</dbReference>
<dbReference type="HPA" id="ENSG00000243789">
    <property type="expression patterns" value="Low tissue specificity"/>
</dbReference>
<dbReference type="neXtProt" id="NX_P0C870"/>
<dbReference type="PharmGKB" id="PA162392530"/>
<dbReference type="VEuPathDB" id="HostDB:ENSG00000243789"/>
<dbReference type="eggNOG" id="KOG2508">
    <property type="taxonomic scope" value="Eukaryota"/>
</dbReference>
<dbReference type="GeneTree" id="ENSGT00900000141196"/>
<dbReference type="HOGENOM" id="CLU_016785_6_0_1"/>
<dbReference type="InParanoid" id="P0C870"/>
<dbReference type="OMA" id="YWHDMEF"/>
<dbReference type="OrthoDB" id="415358at2759"/>
<dbReference type="PAN-GO" id="P0C870">
    <property type="GO annotations" value="1 GO annotation based on evolutionary models"/>
</dbReference>
<dbReference type="PhylomeDB" id="P0C870"/>
<dbReference type="TreeFam" id="TF329946"/>
<dbReference type="BioCyc" id="MetaCyc:G66-32545-MONOMER"/>
<dbReference type="BRENDA" id="1.14.11.27">
    <property type="organism ID" value="2681"/>
</dbReference>
<dbReference type="BRENDA" id="1.14.11.63">
    <property type="organism ID" value="2681"/>
</dbReference>
<dbReference type="PathwayCommons" id="P0C870"/>
<dbReference type="Reactome" id="R-HSA-9629569">
    <property type="pathway name" value="Protein hydroxylation"/>
</dbReference>
<dbReference type="SignaLink" id="P0C870"/>
<dbReference type="BioGRID-ORCS" id="100137047">
    <property type="hits" value="16 hits in 1123 CRISPR screens"/>
</dbReference>
<dbReference type="GenomeRNAi" id="100137047"/>
<dbReference type="Pharos" id="P0C870">
    <property type="development level" value="Tbio"/>
</dbReference>
<dbReference type="PRO" id="PR:P0C870"/>
<dbReference type="Proteomes" id="UP000005640">
    <property type="component" value="Chromosome 15"/>
</dbReference>
<dbReference type="RNAct" id="P0C870">
    <property type="molecule type" value="protein"/>
</dbReference>
<dbReference type="Bgee" id="ENSG00000243789">
    <property type="expression patterns" value="Expressed in lower esophagus mucosa and 100 other cell types or tissues"/>
</dbReference>
<dbReference type="ExpressionAtlas" id="P0C870">
    <property type="expression patterns" value="baseline and differential"/>
</dbReference>
<dbReference type="GO" id="GO:0005737">
    <property type="term" value="C:cytoplasm"/>
    <property type="evidence" value="ECO:0000314"/>
    <property type="project" value="UniProtKB"/>
</dbReference>
<dbReference type="GO" id="GO:0005829">
    <property type="term" value="C:cytosol"/>
    <property type="evidence" value="ECO:0000304"/>
    <property type="project" value="Reactome"/>
</dbReference>
<dbReference type="GO" id="GO:0005634">
    <property type="term" value="C:nucleus"/>
    <property type="evidence" value="ECO:0000314"/>
    <property type="project" value="UniProtKB"/>
</dbReference>
<dbReference type="GO" id="GO:0016706">
    <property type="term" value="F:2-oxoglutarate-dependent dioxygenase activity"/>
    <property type="evidence" value="ECO:0000318"/>
    <property type="project" value="GO_Central"/>
</dbReference>
<dbReference type="GO" id="GO:0004177">
    <property type="term" value="F:aminopeptidase activity"/>
    <property type="evidence" value="ECO:0000314"/>
    <property type="project" value="UniProtKB"/>
</dbReference>
<dbReference type="GO" id="GO:0004175">
    <property type="term" value="F:endopeptidase activity"/>
    <property type="evidence" value="ECO:0000314"/>
    <property type="project" value="GO_Central"/>
</dbReference>
<dbReference type="GO" id="GO:0046872">
    <property type="term" value="F:metal ion binding"/>
    <property type="evidence" value="ECO:0007669"/>
    <property type="project" value="UniProtKB-KW"/>
</dbReference>
<dbReference type="GO" id="GO:0004497">
    <property type="term" value="F:monooxygenase activity"/>
    <property type="evidence" value="ECO:0000314"/>
    <property type="project" value="UniProtKB"/>
</dbReference>
<dbReference type="GO" id="GO:0106155">
    <property type="term" value="F:peptidyl-lysine 3-dioxygenase activity"/>
    <property type="evidence" value="ECO:0000314"/>
    <property type="project" value="UniProtKB"/>
</dbReference>
<dbReference type="GO" id="GO:0018126">
    <property type="term" value="P:protein hydroxylation"/>
    <property type="evidence" value="ECO:0000314"/>
    <property type="project" value="UniProtKB"/>
</dbReference>
<dbReference type="GO" id="GO:0006508">
    <property type="term" value="P:proteolysis"/>
    <property type="evidence" value="ECO:0007669"/>
    <property type="project" value="UniProtKB-KW"/>
</dbReference>
<dbReference type="FunFam" id="2.60.120.10:FF:000059">
    <property type="entry name" value="jmjC domain-containing protein 7"/>
    <property type="match status" value="1"/>
</dbReference>
<dbReference type="Gene3D" id="2.60.120.10">
    <property type="entry name" value="Jelly Rolls"/>
    <property type="match status" value="1"/>
</dbReference>
<dbReference type="InterPro" id="IPR041667">
    <property type="entry name" value="Cupin_8"/>
</dbReference>
<dbReference type="InterPro" id="IPR003347">
    <property type="entry name" value="JmjC_dom"/>
</dbReference>
<dbReference type="InterPro" id="IPR014710">
    <property type="entry name" value="RmlC-like_jellyroll"/>
</dbReference>
<dbReference type="PANTHER" id="PTHR12461:SF99">
    <property type="entry name" value="BIFUNCTIONAL PEPTIDASE AND (3S)-LYSYL HYDROXYLASE JMJD7"/>
    <property type="match status" value="1"/>
</dbReference>
<dbReference type="PANTHER" id="PTHR12461">
    <property type="entry name" value="HYPOXIA-INDUCIBLE FACTOR 1 ALPHA INHIBITOR-RELATED"/>
    <property type="match status" value="1"/>
</dbReference>
<dbReference type="Pfam" id="PF13621">
    <property type="entry name" value="Cupin_8"/>
    <property type="match status" value="1"/>
</dbReference>
<dbReference type="SMART" id="SM00558">
    <property type="entry name" value="JmjC"/>
    <property type="match status" value="1"/>
</dbReference>
<dbReference type="SUPFAM" id="SSF51197">
    <property type="entry name" value="Clavaminate synthase-like"/>
    <property type="match status" value="1"/>
</dbReference>
<dbReference type="PROSITE" id="PS51184">
    <property type="entry name" value="JMJC"/>
    <property type="match status" value="1"/>
</dbReference>
<accession>P0C870</accession>
<accession>A5D6V5</accession>
<accession>O95712</accession>
<accession>Q59GF9</accession>
<accession>Q8TB10</accession>
<accession>Q9UKV7</accession>
<feature type="chain" id="PRO_0000349374" description="Bifunctional peptidase and (3S)-lysyl hydroxylase JMJD7">
    <location>
        <begin position="1"/>
        <end position="316"/>
    </location>
</feature>
<feature type="domain" description="JmjC" evidence="1">
    <location>
        <begin position="128"/>
        <end position="307"/>
    </location>
</feature>
<feature type="binding site" evidence="4">
    <location>
        <position position="178"/>
    </location>
    <ligand>
        <name>Fe cation</name>
        <dbReference type="ChEBI" id="CHEBI:24875"/>
        <note>catalytic</note>
    </ligand>
</feature>
<feature type="binding site" evidence="4">
    <location>
        <position position="180"/>
    </location>
    <ligand>
        <name>Fe cation</name>
        <dbReference type="ChEBI" id="CHEBI:24875"/>
        <note>catalytic</note>
    </ligand>
</feature>
<feature type="binding site" evidence="4">
    <location>
        <position position="277"/>
    </location>
    <ligand>
        <name>Fe cation</name>
        <dbReference type="ChEBI" id="CHEBI:24875"/>
        <note>catalytic</note>
    </ligand>
</feature>
<feature type="disulfide bond" description="Interchain" evidence="4 12 13">
    <location>
        <position position="47"/>
    </location>
</feature>
<feature type="sequence variant" id="VAR_027046" description="In dbSNP:rs7174710.">
    <original>A</original>
    <variation>G</variation>
    <location>
        <position position="28"/>
    </location>
</feature>
<feature type="sequence variant" id="VAR_069392" evidence="2">
    <original>M</original>
    <variation>V</variation>
    <location>
        <position position="160"/>
    </location>
</feature>
<feature type="mutagenesis site" description="Impairs homodimer formation." evidence="4">
    <original>C</original>
    <variation>A</variation>
    <location>
        <position position="47"/>
    </location>
</feature>
<feature type="mutagenesis site" description="Loss of peptidase activity toward methylated histones and reduced anchorage-independent growth of transformed cells; when associated with A-180 and A-277. Impairs L-lysine (3S)-hydroxylase activity. Impairs the interaction with DRG1 and DRG2." evidence="3 4">
    <original>H</original>
    <variation>A</variation>
    <location>
        <position position="178"/>
    </location>
</feature>
<feature type="mutagenesis site" description="Loss of peptidase activity toward methylated histones and reduced anchorage-independent growth of transformed cells; when associated with A-180 and A-277." evidence="3">
    <original>D</original>
    <variation>A</variation>
    <location>
        <position position="180"/>
    </location>
</feature>
<feature type="mutagenesis site" description="Loss of peptidase activity toward methylated histones and reduced anchorage-independent growth of transformed cells; when associated with A-180 and A-277." evidence="3">
    <original>H</original>
    <variation>A</variation>
    <location>
        <position position="277"/>
    </location>
</feature>
<feature type="helix" evidence="14">
    <location>
        <begin position="1"/>
        <end position="24"/>
    </location>
</feature>
<feature type="strand" evidence="14">
    <location>
        <begin position="31"/>
        <end position="34"/>
    </location>
</feature>
<feature type="helix" evidence="14">
    <location>
        <begin position="38"/>
        <end position="44"/>
    </location>
</feature>
<feature type="turn" evidence="14">
    <location>
        <begin position="45"/>
        <end position="49"/>
    </location>
</feature>
<feature type="strand" evidence="14">
    <location>
        <begin position="52"/>
        <end position="58"/>
    </location>
</feature>
<feature type="helix" evidence="14">
    <location>
        <begin position="62"/>
        <end position="66"/>
    </location>
</feature>
<feature type="helix" evidence="14">
    <location>
        <begin position="69"/>
        <end position="76"/>
    </location>
</feature>
<feature type="strand" evidence="14">
    <location>
        <begin position="80"/>
        <end position="95"/>
    </location>
</feature>
<feature type="strand" evidence="14">
    <location>
        <begin position="98"/>
        <end position="101"/>
    </location>
</feature>
<feature type="strand" evidence="14">
    <location>
        <begin position="103"/>
        <end position="108"/>
    </location>
</feature>
<feature type="helix" evidence="14">
    <location>
        <begin position="109"/>
        <end position="116"/>
    </location>
</feature>
<feature type="strand" evidence="14">
    <location>
        <begin position="123"/>
        <end position="128"/>
    </location>
</feature>
<feature type="helix" evidence="14">
    <location>
        <begin position="134"/>
        <end position="138"/>
    </location>
</feature>
<feature type="helix" evidence="14">
    <location>
        <begin position="140"/>
        <end position="145"/>
    </location>
</feature>
<feature type="helix" evidence="14">
    <location>
        <begin position="151"/>
        <end position="157"/>
    </location>
</feature>
<feature type="strand" evidence="14">
    <location>
        <begin position="162"/>
        <end position="169"/>
    </location>
</feature>
<feature type="strand" evidence="14">
    <location>
        <begin position="174"/>
        <end position="178"/>
    </location>
</feature>
<feature type="strand" evidence="14">
    <location>
        <begin position="181"/>
        <end position="198"/>
    </location>
</feature>
<feature type="helix" evidence="14">
    <location>
        <begin position="200"/>
        <end position="205"/>
    </location>
</feature>
<feature type="strand" evidence="14">
    <location>
        <begin position="209"/>
        <end position="218"/>
    </location>
</feature>
<feature type="strand" evidence="14">
    <location>
        <begin position="224"/>
        <end position="228"/>
    </location>
</feature>
<feature type="strand" evidence="14">
    <location>
        <begin position="235"/>
        <end position="237"/>
    </location>
</feature>
<feature type="turn" evidence="14">
    <location>
        <begin position="247"/>
        <end position="249"/>
    </location>
</feature>
<feature type="helix" evidence="14">
    <location>
        <begin position="251"/>
        <end position="255"/>
    </location>
</feature>
<feature type="strand" evidence="14">
    <location>
        <begin position="259"/>
        <end position="264"/>
    </location>
</feature>
<feature type="strand" evidence="14">
    <location>
        <begin position="268"/>
        <end position="271"/>
    </location>
</feature>
<feature type="strand" evidence="14">
    <location>
        <begin position="276"/>
        <end position="281"/>
    </location>
</feature>
<feature type="strand" evidence="14">
    <location>
        <begin position="286"/>
        <end position="293"/>
    </location>
</feature>
<feature type="helix" evidence="14">
    <location>
        <begin position="298"/>
        <end position="312"/>
    </location>
</feature>
<name>JMJD7_HUMAN</name>
<keyword id="KW-0002">3D-structure</keyword>
<keyword id="KW-0031">Aminopeptidase</keyword>
<keyword id="KW-0963">Cytoplasm</keyword>
<keyword id="KW-1015">Disulfide bond</keyword>
<keyword id="KW-0378">Hydrolase</keyword>
<keyword id="KW-0408">Iron</keyword>
<keyword id="KW-0479">Metal-binding</keyword>
<keyword id="KW-0503">Monooxygenase</keyword>
<keyword id="KW-0539">Nucleus</keyword>
<keyword id="KW-0560">Oxidoreductase</keyword>
<keyword id="KW-0645">Protease</keyword>
<keyword id="KW-1267">Proteomics identification</keyword>
<keyword id="KW-1185">Reference proteome</keyword>
<protein>
    <recommendedName>
        <fullName evidence="9 10">Bifunctional peptidase and (3S)-lysyl hydroxylase JMJD7</fullName>
        <ecNumber evidence="4 5">1.14.11.63</ecNumber>
        <ecNumber evidence="3">3.4.-.-</ecNumber>
    </recommendedName>
    <alternativeName>
        <fullName evidence="6">JmjC domain-containing protein 7</fullName>
    </alternativeName>
    <alternativeName>
        <fullName evidence="6">Jumonji domain-containing protein 7</fullName>
    </alternativeName>
    <alternativeName>
        <fullName evidence="7">L-lysine (3S)-hydroxylase JMJD7</fullName>
    </alternativeName>
</protein>
<gene>
    <name evidence="6 11" type="primary">JMJD7</name>
</gene>
<reference key="1">
    <citation type="journal article" date="2004" name="Nat. Genet.">
        <title>Complete sequencing and characterization of 21,243 full-length human cDNAs.</title>
        <authorList>
            <person name="Ota T."/>
            <person name="Suzuki Y."/>
            <person name="Nishikawa T."/>
            <person name="Otsuki T."/>
            <person name="Sugiyama T."/>
            <person name="Irie R."/>
            <person name="Wakamatsu A."/>
            <person name="Hayashi K."/>
            <person name="Sato H."/>
            <person name="Nagai K."/>
            <person name="Kimura K."/>
            <person name="Makita H."/>
            <person name="Sekine M."/>
            <person name="Obayashi M."/>
            <person name="Nishi T."/>
            <person name="Shibahara T."/>
            <person name="Tanaka T."/>
            <person name="Ishii S."/>
            <person name="Yamamoto J."/>
            <person name="Saito K."/>
            <person name="Kawai Y."/>
            <person name="Isono Y."/>
            <person name="Nakamura Y."/>
            <person name="Nagahari K."/>
            <person name="Murakami K."/>
            <person name="Yasuda T."/>
            <person name="Iwayanagi T."/>
            <person name="Wagatsuma M."/>
            <person name="Shiratori A."/>
            <person name="Sudo H."/>
            <person name="Hosoiri T."/>
            <person name="Kaku Y."/>
            <person name="Kodaira H."/>
            <person name="Kondo H."/>
            <person name="Sugawara M."/>
            <person name="Takahashi M."/>
            <person name="Kanda K."/>
            <person name="Yokoi T."/>
            <person name="Furuya T."/>
            <person name="Kikkawa E."/>
            <person name="Omura Y."/>
            <person name="Abe K."/>
            <person name="Kamihara K."/>
            <person name="Katsuta N."/>
            <person name="Sato K."/>
            <person name="Tanikawa M."/>
            <person name="Yamazaki M."/>
            <person name="Ninomiya K."/>
            <person name="Ishibashi T."/>
            <person name="Yamashita H."/>
            <person name="Murakawa K."/>
            <person name="Fujimori K."/>
            <person name="Tanai H."/>
            <person name="Kimata M."/>
            <person name="Watanabe M."/>
            <person name="Hiraoka S."/>
            <person name="Chiba Y."/>
            <person name="Ishida S."/>
            <person name="Ono Y."/>
            <person name="Takiguchi S."/>
            <person name="Watanabe S."/>
            <person name="Yosida M."/>
            <person name="Hotuta T."/>
            <person name="Kusano J."/>
            <person name="Kanehori K."/>
            <person name="Takahashi-Fujii A."/>
            <person name="Hara H."/>
            <person name="Tanase T.-O."/>
            <person name="Nomura Y."/>
            <person name="Togiya S."/>
            <person name="Komai F."/>
            <person name="Hara R."/>
            <person name="Takeuchi K."/>
            <person name="Arita M."/>
            <person name="Imose N."/>
            <person name="Musashino K."/>
            <person name="Yuuki H."/>
            <person name="Oshima A."/>
            <person name="Sasaki N."/>
            <person name="Aotsuka S."/>
            <person name="Yoshikawa Y."/>
            <person name="Matsunawa H."/>
            <person name="Ichihara T."/>
            <person name="Shiohata N."/>
            <person name="Sano S."/>
            <person name="Moriya S."/>
            <person name="Momiyama H."/>
            <person name="Satoh N."/>
            <person name="Takami S."/>
            <person name="Terashima Y."/>
            <person name="Suzuki O."/>
            <person name="Nakagawa S."/>
            <person name="Senoh A."/>
            <person name="Mizoguchi H."/>
            <person name="Goto Y."/>
            <person name="Shimizu F."/>
            <person name="Wakebe H."/>
            <person name="Hishigaki H."/>
            <person name="Watanabe T."/>
            <person name="Sugiyama A."/>
            <person name="Takemoto M."/>
            <person name="Kawakami B."/>
            <person name="Yamazaki M."/>
            <person name="Watanabe K."/>
            <person name="Kumagai A."/>
            <person name="Itakura S."/>
            <person name="Fukuzumi Y."/>
            <person name="Fujimori Y."/>
            <person name="Komiyama M."/>
            <person name="Tashiro H."/>
            <person name="Tanigami A."/>
            <person name="Fujiwara T."/>
            <person name="Ono T."/>
            <person name="Yamada K."/>
            <person name="Fujii Y."/>
            <person name="Ozaki K."/>
            <person name="Hirao M."/>
            <person name="Ohmori Y."/>
            <person name="Kawabata A."/>
            <person name="Hikiji T."/>
            <person name="Kobatake N."/>
            <person name="Inagaki H."/>
            <person name="Ikema Y."/>
            <person name="Okamoto S."/>
            <person name="Okitani R."/>
            <person name="Kawakami T."/>
            <person name="Noguchi S."/>
            <person name="Itoh T."/>
            <person name="Shigeta K."/>
            <person name="Senba T."/>
            <person name="Matsumura K."/>
            <person name="Nakajima Y."/>
            <person name="Mizuno T."/>
            <person name="Morinaga M."/>
            <person name="Sasaki M."/>
            <person name="Togashi T."/>
            <person name="Oyama M."/>
            <person name="Hata H."/>
            <person name="Watanabe M."/>
            <person name="Komatsu T."/>
            <person name="Mizushima-Sugano J."/>
            <person name="Satoh T."/>
            <person name="Shirai Y."/>
            <person name="Takahashi Y."/>
            <person name="Nakagawa K."/>
            <person name="Okumura K."/>
            <person name="Nagase T."/>
            <person name="Nomura N."/>
            <person name="Kikuchi H."/>
            <person name="Masuho Y."/>
            <person name="Yamashita R."/>
            <person name="Nakai K."/>
            <person name="Yada T."/>
            <person name="Nakamura Y."/>
            <person name="Ohara O."/>
            <person name="Isogai T."/>
            <person name="Sugano S."/>
        </authorList>
    </citation>
    <scope>NUCLEOTIDE SEQUENCE [LARGE SCALE MRNA]</scope>
    <source>
        <tissue>Brain</tissue>
        <tissue>Hippocampus</tissue>
    </source>
</reference>
<reference key="2">
    <citation type="journal article" date="2004" name="Genome Res.">
        <title>The status, quality, and expansion of the NIH full-length cDNA project: the Mammalian Gene Collection (MGC).</title>
        <authorList>
            <consortium name="The MGC Project Team"/>
        </authorList>
    </citation>
    <scope>NUCLEOTIDE SEQUENCE [LARGE SCALE MRNA]</scope>
    <source>
        <tissue>Uterus</tissue>
    </source>
</reference>
<reference key="3">
    <citation type="journal article" date="2017" name="Proc. Natl. Acad. Sci. U.S.A.">
        <title>Clipping of arginine-methylated histone tails by JMJD5 and JMJD7.</title>
        <authorList>
            <person name="Liu H."/>
            <person name="Wang C."/>
            <person name="Lee S."/>
            <person name="Deng Y."/>
            <person name="Wither M."/>
            <person name="Oh S."/>
            <person name="Ning F."/>
            <person name="Dege C."/>
            <person name="Zhang Q."/>
            <person name="Liu X."/>
            <person name="Johnson A.M."/>
            <person name="Zang J."/>
            <person name="Chen Z."/>
            <person name="Janknecht R."/>
            <person name="Hansen K."/>
            <person name="Marrack P."/>
            <person name="Li C.Y."/>
            <person name="Kappler J.W."/>
            <person name="Hagman J."/>
            <person name="Zhang G."/>
        </authorList>
    </citation>
    <scope>FUNCTION</scope>
    <scope>MUTAGENESIS OF HIS-178; ASP-180 AND HIS-277</scope>
</reference>
<reference key="4">
    <citation type="journal article" date="2022" name="Sci. Rep.">
        <title>Conservation of the unusual dimeric JmjC fold of JMJD7 from Drosophila melanogaster to humans.</title>
        <authorList>
            <person name="Chowdhury R."/>
            <person name="Abboud M.I."/>
            <person name="Wiley J."/>
            <person name="Tumber A."/>
            <person name="Markolovic S."/>
            <person name="Schofield C.J."/>
        </authorList>
    </citation>
    <scope>CATALYTIC ACTIVITY</scope>
</reference>
<reference key="5">
    <citation type="journal article" date="2018" name="Nat. Chem. Biol.">
        <title>The Jumonji-C oxygenase JMJD7 catalyzes (3S)-lysyl hydroxylation of TRAFAC GTPases.</title>
        <authorList>
            <person name="Markolovic S."/>
            <person name="Zhuang Q."/>
            <person name="Wilkins S.E."/>
            <person name="Eaton C.D."/>
            <person name="Abboud M.I."/>
            <person name="Katz M.J."/>
            <person name="McNeil H.E."/>
            <person name="Lesniak R.K."/>
            <person name="Hall C."/>
            <person name="Struwe W.B."/>
            <person name="Konietzny R."/>
            <person name="Davis S."/>
            <person name="Yang M."/>
            <person name="Ge W."/>
            <person name="Benesch J.L.P."/>
            <person name="Kessler B.M."/>
            <person name="Ratcliffe P.J."/>
            <person name="Cockman M.E."/>
            <person name="Fischer R."/>
            <person name="Wappner P."/>
            <person name="Chowdhury R."/>
            <person name="Coleman M.L."/>
            <person name="Schofield C.J."/>
        </authorList>
    </citation>
    <scope>X-RAY CRYSTALLOGRAPHY (2.17 ANGSTROMS) IN COMPLEX WITH 2-OXOGLUTARATE</scope>
    <scope>DISULFIDE BOND</scope>
    <scope>FUNCTION</scope>
    <scope>CATALYTIC ACTIVITY</scope>
    <scope>COFACTOR</scope>
    <scope>SUBCELLULAR LOCATION</scope>
    <scope>SUBSTRATE SPECIFICITY</scope>
    <scope>MUTAGENESIS OF CYS-47 AND HIS-178</scope>
</reference>
<reference key="6">
    <citation type="journal article" date="2012" name="N. Engl. J. Med.">
        <title>Diagnostic exome sequencing in persons with severe intellectual disability.</title>
        <authorList>
            <person name="de Ligt J."/>
            <person name="Willemsen M.H."/>
            <person name="van Bon B.W."/>
            <person name="Kleefstra T."/>
            <person name="Yntema H.G."/>
            <person name="Kroes T."/>
            <person name="Vulto-van Silfhout A.T."/>
            <person name="Koolen D.A."/>
            <person name="de Vries P."/>
            <person name="Gilissen C."/>
            <person name="del Rosario M."/>
            <person name="Hoischen A."/>
            <person name="Scheffer H."/>
            <person name="de Vries B.B."/>
            <person name="Brunner H.G."/>
            <person name="Veltman J.A."/>
            <person name="Vissers L.E."/>
        </authorList>
    </citation>
    <scope>VARIANT VAL-160</scope>
</reference>